<protein>
    <recommendedName>
        <fullName>Serine/threonine-protein kinase HSL1</fullName>
        <ecNumber>2.7.11.1</ecNumber>
    </recommendedName>
</protein>
<feature type="chain" id="PRO_0000424369" description="Serine/threonine-protein kinase HSL1">
    <location>
        <begin position="1"/>
        <end position="1462"/>
    </location>
</feature>
<feature type="domain" description="Protein kinase" evidence="2">
    <location>
        <begin position="65"/>
        <end position="330"/>
    </location>
</feature>
<feature type="region of interest" description="Disordered" evidence="4">
    <location>
        <begin position="1"/>
        <end position="26"/>
    </location>
</feature>
<feature type="region of interest" description="Disordered" evidence="4">
    <location>
        <begin position="41"/>
        <end position="69"/>
    </location>
</feature>
<feature type="region of interest" description="Disordered" evidence="4">
    <location>
        <begin position="412"/>
        <end position="450"/>
    </location>
</feature>
<feature type="region of interest" description="Disordered" evidence="4">
    <location>
        <begin position="471"/>
        <end position="540"/>
    </location>
</feature>
<feature type="region of interest" description="Disordered" evidence="4">
    <location>
        <begin position="598"/>
        <end position="637"/>
    </location>
</feature>
<feature type="region of interest" description="Disordered" evidence="4">
    <location>
        <begin position="992"/>
        <end position="1031"/>
    </location>
</feature>
<feature type="region of interest" description="Disordered" evidence="4">
    <location>
        <begin position="1095"/>
        <end position="1230"/>
    </location>
</feature>
<feature type="region of interest" description="Disordered" evidence="4">
    <location>
        <begin position="1269"/>
        <end position="1321"/>
    </location>
</feature>
<feature type="coiled-coil region" evidence="1">
    <location>
        <begin position="636"/>
        <end position="715"/>
    </location>
</feature>
<feature type="compositionally biased region" description="Polar residues" evidence="4">
    <location>
        <begin position="428"/>
        <end position="440"/>
    </location>
</feature>
<feature type="compositionally biased region" description="Polar residues" evidence="4">
    <location>
        <begin position="471"/>
        <end position="487"/>
    </location>
</feature>
<feature type="compositionally biased region" description="Low complexity" evidence="4">
    <location>
        <begin position="510"/>
        <end position="526"/>
    </location>
</feature>
<feature type="compositionally biased region" description="Polar residues" evidence="4">
    <location>
        <begin position="527"/>
        <end position="540"/>
    </location>
</feature>
<feature type="compositionally biased region" description="Pro residues" evidence="4">
    <location>
        <begin position="610"/>
        <end position="620"/>
    </location>
</feature>
<feature type="compositionally biased region" description="Basic and acidic residues" evidence="4">
    <location>
        <begin position="1095"/>
        <end position="1130"/>
    </location>
</feature>
<feature type="compositionally biased region" description="Acidic residues" evidence="4">
    <location>
        <begin position="1131"/>
        <end position="1153"/>
    </location>
</feature>
<feature type="compositionally biased region" description="Polar residues" evidence="4">
    <location>
        <begin position="1165"/>
        <end position="1176"/>
    </location>
</feature>
<feature type="compositionally biased region" description="Polar residues" evidence="4">
    <location>
        <begin position="1197"/>
        <end position="1218"/>
    </location>
</feature>
<feature type="compositionally biased region" description="Polar residues" evidence="4">
    <location>
        <begin position="1292"/>
        <end position="1302"/>
    </location>
</feature>
<feature type="active site" description="Proton acceptor" evidence="2 3">
    <location>
        <position position="201"/>
    </location>
</feature>
<feature type="binding site" evidence="2">
    <location>
        <begin position="71"/>
        <end position="79"/>
    </location>
    <ligand>
        <name>ATP</name>
        <dbReference type="ChEBI" id="CHEBI:30616"/>
    </ligand>
</feature>
<feature type="binding site" evidence="2">
    <location>
        <position position="94"/>
    </location>
    <ligand>
        <name>ATP</name>
        <dbReference type="ChEBI" id="CHEBI:30616"/>
    </ligand>
</feature>
<gene>
    <name type="primary">HSL1</name>
    <name type="ordered locus">CAALFM_C502840CA</name>
    <name type="ORF">CaO19.11784</name>
    <name type="ORF">CaO19.4308</name>
</gene>
<keyword id="KW-0067">ATP-binding</keyword>
<keyword id="KW-0175">Coiled coil</keyword>
<keyword id="KW-0418">Kinase</keyword>
<keyword id="KW-0547">Nucleotide-binding</keyword>
<keyword id="KW-0597">Phosphoprotein</keyword>
<keyword id="KW-1185">Reference proteome</keyword>
<keyword id="KW-0723">Serine/threonine-protein kinase</keyword>
<keyword id="KW-0808">Transferase</keyword>
<keyword id="KW-0843">Virulence</keyword>
<proteinExistence type="evidence at protein level"/>
<dbReference type="EC" id="2.7.11.1"/>
<dbReference type="EMBL" id="CP017627">
    <property type="protein sequence ID" value="AOW29709.1"/>
    <property type="molecule type" value="Genomic_DNA"/>
</dbReference>
<dbReference type="RefSeq" id="XP_720615.2">
    <property type="nucleotide sequence ID" value="XM_715522.2"/>
</dbReference>
<dbReference type="SMR" id="Q5AG71"/>
<dbReference type="BioGRID" id="1220785">
    <property type="interactions" value="2"/>
</dbReference>
<dbReference type="STRING" id="237561.Q5AG71"/>
<dbReference type="EnsemblFungi" id="C5_02840C_A-T">
    <property type="protein sequence ID" value="C5_02840C_A-T-p1"/>
    <property type="gene ID" value="C5_02840C_A"/>
</dbReference>
<dbReference type="GeneID" id="3637810"/>
<dbReference type="KEGG" id="cal:CAALFM_C502840CA"/>
<dbReference type="CGD" id="CAL0000190859">
    <property type="gene designation" value="HSL1"/>
</dbReference>
<dbReference type="VEuPathDB" id="FungiDB:C5_02840C_A"/>
<dbReference type="eggNOG" id="KOG0588">
    <property type="taxonomic scope" value="Eukaryota"/>
</dbReference>
<dbReference type="HOGENOM" id="CLU_003363_0_0_1"/>
<dbReference type="InParanoid" id="Q5AG71"/>
<dbReference type="OrthoDB" id="504170at2759"/>
<dbReference type="PRO" id="PR:Q5AG71"/>
<dbReference type="Proteomes" id="UP000000559">
    <property type="component" value="Chromosome 5"/>
</dbReference>
<dbReference type="GO" id="GO:0005935">
    <property type="term" value="C:cellular bud neck"/>
    <property type="evidence" value="ECO:0000314"/>
    <property type="project" value="CGD"/>
</dbReference>
<dbReference type="GO" id="GO:0005737">
    <property type="term" value="C:cytoplasm"/>
    <property type="evidence" value="ECO:0000318"/>
    <property type="project" value="GO_Central"/>
</dbReference>
<dbReference type="GO" id="GO:0005634">
    <property type="term" value="C:nucleus"/>
    <property type="evidence" value="ECO:0000318"/>
    <property type="project" value="GO_Central"/>
</dbReference>
<dbReference type="GO" id="GO:0005940">
    <property type="term" value="C:septin ring"/>
    <property type="evidence" value="ECO:0000314"/>
    <property type="project" value="CGD"/>
</dbReference>
<dbReference type="GO" id="GO:0005524">
    <property type="term" value="F:ATP binding"/>
    <property type="evidence" value="ECO:0007669"/>
    <property type="project" value="UniProtKB-KW"/>
</dbReference>
<dbReference type="GO" id="GO:0004672">
    <property type="term" value="F:protein kinase activity"/>
    <property type="evidence" value="ECO:0000315"/>
    <property type="project" value="CGD"/>
</dbReference>
<dbReference type="GO" id="GO:0106310">
    <property type="term" value="F:protein serine kinase activity"/>
    <property type="evidence" value="ECO:0007669"/>
    <property type="project" value="RHEA"/>
</dbReference>
<dbReference type="GO" id="GO:0004674">
    <property type="term" value="F:protein serine/threonine kinase activity"/>
    <property type="evidence" value="ECO:0000318"/>
    <property type="project" value="GO_Central"/>
</dbReference>
<dbReference type="GO" id="GO:0051701">
    <property type="term" value="P:biological process involved in interaction with host"/>
    <property type="evidence" value="ECO:0000315"/>
    <property type="project" value="CGD"/>
</dbReference>
<dbReference type="GO" id="GO:0042149">
    <property type="term" value="P:cellular response to glucose starvation"/>
    <property type="evidence" value="ECO:0000315"/>
    <property type="project" value="CGD"/>
</dbReference>
<dbReference type="GO" id="GO:0030447">
    <property type="term" value="P:filamentous growth"/>
    <property type="evidence" value="ECO:0000315"/>
    <property type="project" value="CGD"/>
</dbReference>
<dbReference type="GO" id="GO:0044182">
    <property type="term" value="P:filamentous growth of a population of unicellular organisms"/>
    <property type="evidence" value="ECO:0000315"/>
    <property type="project" value="CGD"/>
</dbReference>
<dbReference type="GO" id="GO:0000086">
    <property type="term" value="P:G2/M transition of mitotic cell cycle"/>
    <property type="evidence" value="ECO:0000318"/>
    <property type="project" value="GO_Central"/>
</dbReference>
<dbReference type="GO" id="GO:0001403">
    <property type="term" value="P:invasive growth in response to glucose limitation"/>
    <property type="evidence" value="ECO:0000315"/>
    <property type="project" value="CGD"/>
</dbReference>
<dbReference type="GO" id="GO:0060258">
    <property type="term" value="P:negative regulation of filamentous growth"/>
    <property type="evidence" value="ECO:0000315"/>
    <property type="project" value="CGD"/>
</dbReference>
<dbReference type="GO" id="GO:1900429">
    <property type="term" value="P:negative regulation of filamentous growth of a population of unicellular organisms"/>
    <property type="evidence" value="ECO:0000315"/>
    <property type="project" value="CGD"/>
</dbReference>
<dbReference type="GO" id="GO:2000221">
    <property type="term" value="P:negative regulation of pseudohyphal growth"/>
    <property type="evidence" value="ECO:0000315"/>
    <property type="project" value="CGD"/>
</dbReference>
<dbReference type="GO" id="GO:0007124">
    <property type="term" value="P:pseudohyphal growth"/>
    <property type="evidence" value="ECO:0000315"/>
    <property type="project" value="CGD"/>
</dbReference>
<dbReference type="GO" id="GO:0051726">
    <property type="term" value="P:regulation of cell cycle"/>
    <property type="evidence" value="ECO:0000315"/>
    <property type="project" value="CGD"/>
</dbReference>
<dbReference type="CDD" id="cd14081">
    <property type="entry name" value="STKc_BRSK1_2"/>
    <property type="match status" value="1"/>
</dbReference>
<dbReference type="FunFam" id="1.10.510.10:FF:000394">
    <property type="entry name" value="Serine/threonine-protein kinase HSL1"/>
    <property type="match status" value="1"/>
</dbReference>
<dbReference type="Gene3D" id="1.10.510.10">
    <property type="entry name" value="Transferase(Phosphotransferase) domain 1"/>
    <property type="match status" value="1"/>
</dbReference>
<dbReference type="InterPro" id="IPR031850">
    <property type="entry name" value="Fungal_KA1_dom"/>
</dbReference>
<dbReference type="InterPro" id="IPR011009">
    <property type="entry name" value="Kinase-like_dom_sf"/>
</dbReference>
<dbReference type="InterPro" id="IPR000719">
    <property type="entry name" value="Prot_kinase_dom"/>
</dbReference>
<dbReference type="InterPro" id="IPR017441">
    <property type="entry name" value="Protein_kinase_ATP_BS"/>
</dbReference>
<dbReference type="InterPro" id="IPR008271">
    <property type="entry name" value="Ser/Thr_kinase_AS"/>
</dbReference>
<dbReference type="PANTHER" id="PTHR24346">
    <property type="entry name" value="MAP/MICROTUBULE AFFINITY-REGULATING KINASE"/>
    <property type="match status" value="1"/>
</dbReference>
<dbReference type="PANTHER" id="PTHR24346:SF110">
    <property type="entry name" value="NON-SPECIFIC SERINE_THREONINE PROTEIN KINASE"/>
    <property type="match status" value="1"/>
</dbReference>
<dbReference type="Pfam" id="PF16797">
    <property type="entry name" value="Fungal_KA1"/>
    <property type="match status" value="1"/>
</dbReference>
<dbReference type="Pfam" id="PF00069">
    <property type="entry name" value="Pkinase"/>
    <property type="match status" value="1"/>
</dbReference>
<dbReference type="SMART" id="SM00220">
    <property type="entry name" value="S_TKc"/>
    <property type="match status" value="1"/>
</dbReference>
<dbReference type="SUPFAM" id="SSF56112">
    <property type="entry name" value="Protein kinase-like (PK-like)"/>
    <property type="match status" value="1"/>
</dbReference>
<dbReference type="PROSITE" id="PS00107">
    <property type="entry name" value="PROTEIN_KINASE_ATP"/>
    <property type="match status" value="1"/>
</dbReference>
<dbReference type="PROSITE" id="PS50011">
    <property type="entry name" value="PROTEIN_KINASE_DOM"/>
    <property type="match status" value="1"/>
</dbReference>
<dbReference type="PROSITE" id="PS00108">
    <property type="entry name" value="PROTEIN_KINASE_ST"/>
    <property type="match status" value="1"/>
</dbReference>
<sequence length="1462" mass="163674">MSTVVNRRSSHQFDSPSNHLDHSSSMNVDKVVQSVTNATKRLSQISTNTNNSNKKRKTQNKIGPWKLGRTLGRGSTGRVRLAKNTTTGQLAAVKIVPKSNFKKLENPKYKRSKEDATRLPYGIEREIIIMKLISHPNIMGLYDVWENKNDLYLILEYIEGGELFDYLIKRGKLQEYEAINYFKQIINGINYLHQFNICHRDLKPENLLLDFNKNIKIADFGMAALEVKEKLLETSCGSPHYASPEIVAGKNYHGAPSDIWSCGIILFALLTGHLPFDDENIRKLLLKVQSGKFNMPPELSFEAKDLITKMLKVNPRERITIDAILTHPLLAKYPEPTVSYSSTTTLDINSINIKQIESVDKIDKEILKNLSVLFHNCDEKTIISRLLSPNRCPEKMFYYLLMKYRNEHLSNSNSFNSSNDVDSARSLPRSTSYVKTTVTDHATGEKHTTVKKIQQSSSIYSNRSLLKKSTSAKGNVLSNITNRPNTPKQFSASSSFNKKKALHSKTQIYASRSRNASSRSLKSNSSTGRNGNNASVTSVNKIPEITGATVLQPIPSMAMNRGDEQQNKTKKNLTGTFGNKSLLNFQLICEEVFENDKENSKPVSKTPVSQLPPPPPPPIETPTSRTNSVKRGKTWSLARRERELAEQVRQRNEARENKLKAEELARKELEQEKKRIAEEKKRLEQQERELDEKQKLQEKQKAALEKLQKHQSAHDFEGLFASNRRSVTDMAPSSGMSSLDPRAHMVSRANTIGSPNLSSSSVNIDENASKVLHKFGIDVAPSPKRFSRASKTSTSKNLSSFLAPTVSRNLSSQLKTSSSKNLAGYLHGTTDTNGSAIAAKKKDNSTNKALTIEEFNAKERTSMSPSISKASVNKRNSNQSSYYRSMFSDNGNDDNVTKVRTRESHLSVQEEEEMDMENAIDEDISLIPNPRFSRFSFGGLLGSNTVANEEGDWTIMNSTLNHSNTVVRRTHNKSSTMLGLGIKMRDTTTIKEDEEFEDEKPFISVPSSEDDEGNTHKNKRGGLRDSGNYDFDEEHSVASTANTEYSDVASQGQQRPGSHTIHQLETELSNFDLLSYRVADIGKVNKHKPSIVDSKETLLKNHSSDEATIEVKEDNNEHDFNDKIKQHYDDNGDSEEDDEDEDEEEEDDDDDDDARSSFEARPHSHNYSLAEITSESPVGGGYESPSIANDFKKSRHSTGIFSTTQFPRSPYVVNNNGDSNKDENSQQQTKHMLNDGHKGLITSPVQDTFGSKKPVESNSLFRRLSLNPNRAAPKAPAPPPPSAPTSSAAKANISQPLSSPTKGHNRFSRISIGSKNMLQKEDKSTKSNWFKKFFHSLTTPSTKEQSGNSSSKVASKDIKIIDTSLTAAQLIRVIKYQLELKKIEGSISKVDIDEEFGLISGVIPSKFANGRKLKFKIEVIDLINSSSLHVIKMKGNDKGFQSLVNIVTFIIKKEEQDKICRR</sequence>
<reference key="1">
    <citation type="journal article" date="2004" name="Proc. Natl. Acad. Sci. U.S.A.">
        <title>The diploid genome sequence of Candida albicans.</title>
        <authorList>
            <person name="Jones T."/>
            <person name="Federspiel N.A."/>
            <person name="Chibana H."/>
            <person name="Dungan J."/>
            <person name="Kalman S."/>
            <person name="Magee B.B."/>
            <person name="Newport G."/>
            <person name="Thorstenson Y.R."/>
            <person name="Agabian N."/>
            <person name="Magee P.T."/>
            <person name="Davis R.W."/>
            <person name="Scherer S."/>
        </authorList>
    </citation>
    <scope>NUCLEOTIDE SEQUENCE [LARGE SCALE GENOMIC DNA]</scope>
    <source>
        <strain>SC5314 / ATCC MYA-2876</strain>
    </source>
</reference>
<reference key="2">
    <citation type="journal article" date="2007" name="Genome Biol.">
        <title>Assembly of the Candida albicans genome into sixteen supercontigs aligned on the eight chromosomes.</title>
        <authorList>
            <person name="van het Hoog M."/>
            <person name="Rast T.J."/>
            <person name="Martchenko M."/>
            <person name="Grindle S."/>
            <person name="Dignard D."/>
            <person name="Hogues H."/>
            <person name="Cuomo C."/>
            <person name="Berriman M."/>
            <person name="Scherer S."/>
            <person name="Magee B.B."/>
            <person name="Whiteway M."/>
            <person name="Chibana H."/>
            <person name="Nantel A."/>
            <person name="Magee P.T."/>
        </authorList>
    </citation>
    <scope>GENOME REANNOTATION</scope>
    <source>
        <strain>SC5314 / ATCC MYA-2876</strain>
    </source>
</reference>
<reference key="3">
    <citation type="journal article" date="2013" name="Genome Biol.">
        <title>Assembly of a phased diploid Candida albicans genome facilitates allele-specific measurements and provides a simple model for repeat and indel structure.</title>
        <authorList>
            <person name="Muzzey D."/>
            <person name="Schwartz K."/>
            <person name="Weissman J.S."/>
            <person name="Sherlock G."/>
        </authorList>
    </citation>
    <scope>NUCLEOTIDE SEQUENCE [LARGE SCALE GENOMIC DNA]</scope>
    <scope>GENOME REANNOTATION</scope>
    <source>
        <strain>SC5314 / ATCC MYA-2876</strain>
    </source>
</reference>
<reference key="4">
    <citation type="journal article" date="2004" name="J. Cell Biol.">
        <title>In Candida albicans, the Nim1 kinases Gin4 and Hsl1 negatively regulate pseudohypha formation and Gin4 also controls septin organization.</title>
        <authorList>
            <person name="Wightman R."/>
            <person name="Bates S."/>
            <person name="Amornrrattanapan P."/>
            <person name="Sudbery P."/>
        </authorList>
    </citation>
    <scope>FUNCTION</scope>
</reference>
<reference key="5">
    <citation type="journal article" date="2005" name="Mol. Microbiol.">
        <title>Candida albicans protein kinase CaHsl1p regulates cell elongation and virulence.</title>
        <authorList>
            <person name="Umeyama T."/>
            <person name="Kaneko A."/>
            <person name="Nagai Y."/>
            <person name="Hanaoka N."/>
            <person name="Tanabe K."/>
            <person name="Takano Y."/>
            <person name="Niimi M."/>
            <person name="Uehara Y."/>
        </authorList>
    </citation>
    <scope>DISRUPTION PHENOTYPE</scope>
    <scope>FUNCTION</scope>
    <scope>SUBCELLULAR LOCATION</scope>
    <scope>PHOSPHORYLATION</scope>
</reference>
<organism>
    <name type="scientific">Candida albicans (strain SC5314 / ATCC MYA-2876)</name>
    <name type="common">Yeast</name>
    <dbReference type="NCBI Taxonomy" id="237561"/>
    <lineage>
        <taxon>Eukaryota</taxon>
        <taxon>Fungi</taxon>
        <taxon>Dikarya</taxon>
        <taxon>Ascomycota</taxon>
        <taxon>Saccharomycotina</taxon>
        <taxon>Pichiomycetes</taxon>
        <taxon>Debaryomycetaceae</taxon>
        <taxon>Candida/Lodderomyces clade</taxon>
        <taxon>Candida</taxon>
    </lineage>
</organism>
<comment type="function">
    <text evidence="5 6">Protein kinase involved in determination of morphology during the cell cycle of both yeast-form and hyphal cells via regulation of SWE1 and CDC28. Regulates pseudohypha formation, but is not required for septin ring organization or septum formation. Plays an essential role in virulence in a mouse model.</text>
</comment>
<comment type="catalytic activity">
    <reaction>
        <text>L-seryl-[protein] + ATP = O-phospho-L-seryl-[protein] + ADP + H(+)</text>
        <dbReference type="Rhea" id="RHEA:17989"/>
        <dbReference type="Rhea" id="RHEA-COMP:9863"/>
        <dbReference type="Rhea" id="RHEA-COMP:11604"/>
        <dbReference type="ChEBI" id="CHEBI:15378"/>
        <dbReference type="ChEBI" id="CHEBI:29999"/>
        <dbReference type="ChEBI" id="CHEBI:30616"/>
        <dbReference type="ChEBI" id="CHEBI:83421"/>
        <dbReference type="ChEBI" id="CHEBI:456216"/>
        <dbReference type="EC" id="2.7.11.1"/>
    </reaction>
</comment>
<comment type="catalytic activity">
    <reaction>
        <text>L-threonyl-[protein] + ATP = O-phospho-L-threonyl-[protein] + ADP + H(+)</text>
        <dbReference type="Rhea" id="RHEA:46608"/>
        <dbReference type="Rhea" id="RHEA-COMP:11060"/>
        <dbReference type="Rhea" id="RHEA-COMP:11605"/>
        <dbReference type="ChEBI" id="CHEBI:15378"/>
        <dbReference type="ChEBI" id="CHEBI:30013"/>
        <dbReference type="ChEBI" id="CHEBI:30616"/>
        <dbReference type="ChEBI" id="CHEBI:61977"/>
        <dbReference type="ChEBI" id="CHEBI:456216"/>
        <dbReference type="EC" id="2.7.11.1"/>
    </reaction>
</comment>
<comment type="subcellular location">
    <subcellularLocation>
        <location evidence="6">Bud neck</location>
    </subcellularLocation>
    <text>In the hyphal cells, localizes at a potent septation site before the completion of septum formation.</text>
</comment>
<comment type="PTM">
    <text evidence="6">Phosphorylated throughout the cell cycle, except for the G1 phase.</text>
</comment>
<comment type="disruption phenotype">
    <text evidence="6">Leads to elongated cell phenotype.</text>
</comment>
<comment type="similarity">
    <text evidence="7">Belongs to the protein kinase superfamily. CAMK Ser/Thr protein kinase family. NIM1 subfamily.</text>
</comment>
<accession>Q5AG71</accession>
<accession>A0A1D8PNJ3</accession>
<name>HSL1_CANAL</name>
<evidence type="ECO:0000255" key="1"/>
<evidence type="ECO:0000255" key="2">
    <source>
        <dbReference type="PROSITE-ProRule" id="PRU00159"/>
    </source>
</evidence>
<evidence type="ECO:0000255" key="3">
    <source>
        <dbReference type="PROSITE-ProRule" id="PRU10027"/>
    </source>
</evidence>
<evidence type="ECO:0000256" key="4">
    <source>
        <dbReference type="SAM" id="MobiDB-lite"/>
    </source>
</evidence>
<evidence type="ECO:0000269" key="5">
    <source>
    </source>
</evidence>
<evidence type="ECO:0000269" key="6">
    <source>
    </source>
</evidence>
<evidence type="ECO:0000305" key="7"/>